<proteinExistence type="inferred from homology"/>
<gene>
    <name evidence="2" type="primary">tal</name>
    <name type="ordered locus">P9301_05451</name>
</gene>
<keyword id="KW-0963">Cytoplasm</keyword>
<keyword id="KW-0570">Pentose shunt</keyword>
<keyword id="KW-1185">Reference proteome</keyword>
<keyword id="KW-0704">Schiff base</keyword>
<keyword id="KW-0808">Transferase</keyword>
<name>TAL_PROM0</name>
<feature type="chain" id="PRO_1000014507" description="Transaldolase">
    <location>
        <begin position="1"/>
        <end position="333"/>
    </location>
</feature>
<feature type="active site" description="Schiff-base intermediate with substrate" evidence="2">
    <location>
        <position position="135"/>
    </location>
</feature>
<accession>A3PBP3</accession>
<evidence type="ECO:0000250" key="1"/>
<evidence type="ECO:0000255" key="2">
    <source>
        <dbReference type="HAMAP-Rule" id="MF_00492"/>
    </source>
</evidence>
<organism>
    <name type="scientific">Prochlorococcus marinus (strain MIT 9301)</name>
    <dbReference type="NCBI Taxonomy" id="167546"/>
    <lineage>
        <taxon>Bacteria</taxon>
        <taxon>Bacillati</taxon>
        <taxon>Cyanobacteriota</taxon>
        <taxon>Cyanophyceae</taxon>
        <taxon>Synechococcales</taxon>
        <taxon>Prochlorococcaceae</taxon>
        <taxon>Prochlorococcus</taxon>
    </lineage>
</organism>
<sequence>MKSILEQLSSMTVVVADTGDLDSIKKFQPRDATTNPSLILAAAKNPDYVKLIDKSLESSENALPQGFTEIDLIKETVDQVSVFFGKEILKIISGRVSTEVDARLSFDTQATVEKARKLINLYKNFGIEKERILIKIAATWEGIKAAEILEKEGIKCNLTLLFNFCQAVTCANAKITLISPFVGRILDWHKAKTGKTSFVGAEDPGVISVTQIYKYFKEKGFKTEVMGASFRNLDEIKELAGCDLLTIAPKFLEELKKEKGELVRKLDVSTQINHSIDYEFEEKDFRLSMLEDQMASEKLSEGITGFSKAIEELEELLLKRYSEIKNHKLISAN</sequence>
<dbReference type="EC" id="2.2.1.2" evidence="2"/>
<dbReference type="EMBL" id="CP000576">
    <property type="protein sequence ID" value="ABO17168.1"/>
    <property type="molecule type" value="Genomic_DNA"/>
</dbReference>
<dbReference type="RefSeq" id="WP_011862538.1">
    <property type="nucleotide sequence ID" value="NC_009091.1"/>
</dbReference>
<dbReference type="SMR" id="A3PBP3"/>
<dbReference type="STRING" id="167546.P9301_05451"/>
<dbReference type="KEGG" id="pmg:P9301_05451"/>
<dbReference type="eggNOG" id="COG0176">
    <property type="taxonomic scope" value="Bacteria"/>
</dbReference>
<dbReference type="HOGENOM" id="CLU_047470_0_1_3"/>
<dbReference type="OrthoDB" id="9807051at2"/>
<dbReference type="UniPathway" id="UPA00115">
    <property type="reaction ID" value="UER00414"/>
</dbReference>
<dbReference type="Proteomes" id="UP000001430">
    <property type="component" value="Chromosome"/>
</dbReference>
<dbReference type="GO" id="GO:0005737">
    <property type="term" value="C:cytoplasm"/>
    <property type="evidence" value="ECO:0007669"/>
    <property type="project" value="UniProtKB-SubCell"/>
</dbReference>
<dbReference type="GO" id="GO:0004801">
    <property type="term" value="F:transaldolase activity"/>
    <property type="evidence" value="ECO:0000250"/>
    <property type="project" value="UniProtKB"/>
</dbReference>
<dbReference type="GO" id="GO:0005975">
    <property type="term" value="P:carbohydrate metabolic process"/>
    <property type="evidence" value="ECO:0007669"/>
    <property type="project" value="InterPro"/>
</dbReference>
<dbReference type="GO" id="GO:0006098">
    <property type="term" value="P:pentose-phosphate shunt"/>
    <property type="evidence" value="ECO:0007669"/>
    <property type="project" value="UniProtKB-UniRule"/>
</dbReference>
<dbReference type="CDD" id="cd00957">
    <property type="entry name" value="Transaldolase_TalAB"/>
    <property type="match status" value="1"/>
</dbReference>
<dbReference type="FunFam" id="3.20.20.70:FF:000131">
    <property type="entry name" value="Transaldolase"/>
    <property type="match status" value="1"/>
</dbReference>
<dbReference type="Gene3D" id="3.20.20.70">
    <property type="entry name" value="Aldolase class I"/>
    <property type="match status" value="1"/>
</dbReference>
<dbReference type="HAMAP" id="MF_00492">
    <property type="entry name" value="Transaldolase_1"/>
    <property type="match status" value="1"/>
</dbReference>
<dbReference type="InterPro" id="IPR013785">
    <property type="entry name" value="Aldolase_TIM"/>
</dbReference>
<dbReference type="InterPro" id="IPR001585">
    <property type="entry name" value="TAL/FSA"/>
</dbReference>
<dbReference type="InterPro" id="IPR004730">
    <property type="entry name" value="Transaldolase_1"/>
</dbReference>
<dbReference type="InterPro" id="IPR018225">
    <property type="entry name" value="Transaldolase_AS"/>
</dbReference>
<dbReference type="NCBIfam" id="TIGR00874">
    <property type="entry name" value="talAB"/>
    <property type="match status" value="1"/>
</dbReference>
<dbReference type="PANTHER" id="PTHR10683">
    <property type="entry name" value="TRANSALDOLASE"/>
    <property type="match status" value="1"/>
</dbReference>
<dbReference type="PANTHER" id="PTHR10683:SF18">
    <property type="entry name" value="TRANSALDOLASE"/>
    <property type="match status" value="1"/>
</dbReference>
<dbReference type="Pfam" id="PF00923">
    <property type="entry name" value="TAL_FSA"/>
    <property type="match status" value="1"/>
</dbReference>
<dbReference type="SUPFAM" id="SSF51569">
    <property type="entry name" value="Aldolase"/>
    <property type="match status" value="1"/>
</dbReference>
<dbReference type="PROSITE" id="PS01054">
    <property type="entry name" value="TRANSALDOLASE_1"/>
    <property type="match status" value="1"/>
</dbReference>
<dbReference type="PROSITE" id="PS00958">
    <property type="entry name" value="TRANSALDOLASE_2"/>
    <property type="match status" value="1"/>
</dbReference>
<protein>
    <recommendedName>
        <fullName evidence="2">Transaldolase</fullName>
        <ecNumber evidence="2">2.2.1.2</ecNumber>
    </recommendedName>
</protein>
<reference key="1">
    <citation type="journal article" date="2007" name="PLoS Genet.">
        <title>Patterns and implications of gene gain and loss in the evolution of Prochlorococcus.</title>
        <authorList>
            <person name="Kettler G.C."/>
            <person name="Martiny A.C."/>
            <person name="Huang K."/>
            <person name="Zucker J."/>
            <person name="Coleman M.L."/>
            <person name="Rodrigue S."/>
            <person name="Chen F."/>
            <person name="Lapidus A."/>
            <person name="Ferriera S."/>
            <person name="Johnson J."/>
            <person name="Steglich C."/>
            <person name="Church G.M."/>
            <person name="Richardson P."/>
            <person name="Chisholm S.W."/>
        </authorList>
    </citation>
    <scope>NUCLEOTIDE SEQUENCE [LARGE SCALE GENOMIC DNA]</scope>
    <source>
        <strain>MIT 9301</strain>
    </source>
</reference>
<comment type="function">
    <text evidence="2">Transaldolase is important for the balance of metabolites in the pentose-phosphate pathway.</text>
</comment>
<comment type="catalytic activity">
    <reaction evidence="2">
        <text>D-sedoheptulose 7-phosphate + D-glyceraldehyde 3-phosphate = D-erythrose 4-phosphate + beta-D-fructose 6-phosphate</text>
        <dbReference type="Rhea" id="RHEA:17053"/>
        <dbReference type="ChEBI" id="CHEBI:16897"/>
        <dbReference type="ChEBI" id="CHEBI:57483"/>
        <dbReference type="ChEBI" id="CHEBI:57634"/>
        <dbReference type="ChEBI" id="CHEBI:59776"/>
        <dbReference type="EC" id="2.2.1.2"/>
    </reaction>
</comment>
<comment type="pathway">
    <text evidence="2">Carbohydrate degradation; pentose phosphate pathway; D-glyceraldehyde 3-phosphate and beta-D-fructose 6-phosphate from D-ribose 5-phosphate and D-xylulose 5-phosphate (non-oxidative stage): step 2/3.</text>
</comment>
<comment type="subunit">
    <text evidence="1">Homodimer.</text>
</comment>
<comment type="subcellular location">
    <subcellularLocation>
        <location evidence="2">Cytoplasm</location>
    </subcellularLocation>
</comment>
<comment type="similarity">
    <text evidence="2">Belongs to the transaldolase family. Type 1 subfamily.</text>
</comment>